<accession>P30215</accession>
<accession>Q6TNG0</accession>
<feature type="signal peptide" evidence="1">
    <location>
        <begin position="1"/>
        <end position="16"/>
    </location>
</feature>
<feature type="chain" id="PRO_0000037144" description="Hemagglutinin-esterase" evidence="1">
    <location>
        <begin position="17"/>
        <end position="424"/>
    </location>
</feature>
<feature type="topological domain" description="Virion surface" evidence="1">
    <location>
        <begin position="17"/>
        <end position="392"/>
    </location>
</feature>
<feature type="transmembrane region" description="Helical" evidence="1">
    <location>
        <begin position="393"/>
        <end position="413"/>
    </location>
</feature>
<feature type="topological domain" description="Intravirion" evidence="1">
    <location>
        <begin position="414"/>
        <end position="424"/>
    </location>
</feature>
<feature type="region of interest" description="Esterase domain 1" evidence="1">
    <location>
        <begin position="7"/>
        <end position="127"/>
    </location>
</feature>
<feature type="region of interest" description="Receptor binding" evidence="1">
    <location>
        <begin position="128"/>
        <end position="266"/>
    </location>
</feature>
<feature type="region of interest" description="Esterase domain 2" evidence="1">
    <location>
        <begin position="267"/>
        <end position="379"/>
    </location>
</feature>
<feature type="active site" description="Nucleophile" evidence="1">
    <location>
        <position position="40"/>
    </location>
</feature>
<feature type="active site" description="Charge relay system" evidence="1">
    <location>
        <position position="326"/>
    </location>
</feature>
<feature type="active site" description="Charge relay system" evidence="1">
    <location>
        <position position="329"/>
    </location>
</feature>
<feature type="glycosylation site" description="N-linked (GlcNAc...) asparagine; by host" evidence="1">
    <location>
        <position position="54"/>
    </location>
</feature>
<feature type="glycosylation site" description="N-linked (GlcNAc...) asparagine; by host" evidence="1">
    <location>
        <position position="89"/>
    </location>
</feature>
<feature type="glycosylation site" description="N-linked (GlcNAc...) asparagine; by host" evidence="1">
    <location>
        <position position="114"/>
    </location>
</feature>
<feature type="glycosylation site" description="N-linked (GlcNAc...) asparagine; by host" evidence="1">
    <location>
        <position position="153"/>
    </location>
</feature>
<feature type="glycosylation site" description="N-linked (GlcNAc...) asparagine; by host" evidence="1">
    <location>
        <position position="236"/>
    </location>
</feature>
<feature type="glycosylation site" description="N-linked (GlcNAc...) asparagine; by host" evidence="1">
    <location>
        <position position="301"/>
    </location>
</feature>
<feature type="glycosylation site" description="N-linked (GlcNAc...) asparagine; by host" evidence="1">
    <location>
        <position position="316"/>
    </location>
</feature>
<feature type="glycosylation site" description="N-linked (GlcNAc...) asparagine; by host" evidence="1">
    <location>
        <position position="358"/>
    </location>
</feature>
<feature type="glycosylation site" description="N-linked (GlcNAc...) asparagine; by host" evidence="1">
    <location>
        <position position="417"/>
    </location>
</feature>
<feature type="disulfide bond" evidence="1">
    <location>
        <begin position="44"/>
        <end position="65"/>
    </location>
</feature>
<feature type="disulfide bond" evidence="1">
    <location>
        <begin position="113"/>
        <end position="162"/>
    </location>
</feature>
<feature type="disulfide bond" evidence="1">
    <location>
        <begin position="197"/>
        <end position="276"/>
    </location>
</feature>
<feature type="disulfide bond" evidence="1">
    <location>
        <begin position="205"/>
        <end position="249"/>
    </location>
</feature>
<feature type="disulfide bond" evidence="1">
    <location>
        <begin position="307"/>
        <end position="312"/>
    </location>
</feature>
<feature type="disulfide bond" evidence="1">
    <location>
        <begin position="347"/>
        <end position="371"/>
    </location>
</feature>
<feature type="sequence variant" description="In strain: Isolate ATCC VR-759 and Isolate clinical OC43-Paris.">
    <original>S</original>
    <variation>A</variation>
    <location>
        <position position="158"/>
    </location>
</feature>
<feature type="sequence variant" description="In strain: Isolate ATCC VR-759 and Isolate clinical OC43-Paris.">
    <original>N</original>
    <variation>I</variation>
    <location>
        <position position="379"/>
    </location>
</feature>
<feature type="sequence variant" description="In strain: Isolate ATCC VR-759 and Isolate clinical OC43-Paris.">
    <original>VI</original>
    <variation>IV</variation>
    <location>
        <begin position="403"/>
        <end position="404"/>
    </location>
</feature>
<feature type="sequence variant" description="In strain: Isolate ATCC VR-759 and Isolate clinical OC43-Paris.">
    <original>G</original>
    <variation>V</variation>
    <location>
        <position position="418"/>
    </location>
</feature>
<evidence type="ECO:0000255" key="1">
    <source>
        <dbReference type="HAMAP-Rule" id="MF_04207"/>
    </source>
</evidence>
<organismHost>
    <name type="scientific">Homo sapiens</name>
    <name type="common">Human</name>
    <dbReference type="NCBI Taxonomy" id="9606"/>
</organismHost>
<gene>
    <name evidence="1" type="primary">HE</name>
    <name type="ORF">2b</name>
</gene>
<organism>
    <name type="scientific">Human coronavirus OC43</name>
    <name type="common">HCoV-OC43</name>
    <dbReference type="NCBI Taxonomy" id="31631"/>
    <lineage>
        <taxon>Viruses</taxon>
        <taxon>Riboviria</taxon>
        <taxon>Orthornavirae</taxon>
        <taxon>Pisuviricota</taxon>
        <taxon>Pisoniviricetes</taxon>
        <taxon>Nidovirales</taxon>
        <taxon>Cornidovirineae</taxon>
        <taxon>Coronaviridae</taxon>
        <taxon>Orthocoronavirinae</taxon>
        <taxon>Betacoronavirus</taxon>
        <taxon>Embecovirus</taxon>
        <taxon>Betacoronavirus 1</taxon>
    </lineage>
</organism>
<protein>
    <recommendedName>
        <fullName evidence="1">Hemagglutinin-esterase</fullName>
        <shortName evidence="1">HE protein</shortName>
        <ecNumber evidence="1">3.1.1.53</ecNumber>
    </recommendedName>
    <alternativeName>
        <fullName evidence="1">E3 glycoprotein</fullName>
    </alternativeName>
</protein>
<sequence>MFLLPRFILVSCIIGSLGFYNPPTNVVSHVNGDWFLFGDSRSDCNHIVNINPHNYSYMDLNPVLCDSGKISSKAGNSIFRSFHFTDFYNYTGEGQQIIFYEGVNFTPYHAFKCNRSGSNDIWMQNKGLFYTQVYKNMAVYRSLTFVNVPYVYNGSAQSTALCKSGSLVLNNPAYIAPQANSGDYYYKVEADFYLSGCDEYIVPLCIFNGKFLSNTKYYDDSQYYFNKDTGVIYGLNSTETITTGFDLNCYYLVLPSGNYLAISNELLLTVPTKAICLNKRKDFTPVQVVDSRWNNARQSDNMTAVACQPPYCYFRNSTTNYVGVYDINHGDAGFTSILSGLLYNSPCFSQQGVFRYDNVSSVWPLYPYGRCPTAADINNPDLPICVYDPLPVILLGILLGVAVIIIVVLLLYFMVDNGTRLHDA</sequence>
<dbReference type="EC" id="3.1.1.53" evidence="1"/>
<dbReference type="EMBL" id="M76373">
    <property type="protein sequence ID" value="AAA45460.1"/>
    <property type="molecule type" value="Genomic_RNA"/>
</dbReference>
<dbReference type="EMBL" id="AY391777">
    <property type="protein sequence ID" value="AAR01014.1"/>
    <property type="molecule type" value="Genomic_RNA"/>
</dbReference>
<dbReference type="EMBL" id="AY585228">
    <property type="protein sequence ID" value="AAT84353.1"/>
    <property type="molecule type" value="Genomic_RNA"/>
</dbReference>
<dbReference type="EMBL" id="AY585229">
    <property type="protein sequence ID" value="AAT84361.1"/>
    <property type="molecule type" value="Genomic_RNA"/>
</dbReference>
<dbReference type="PIR" id="A39450">
    <property type="entry name" value="HMIHCC"/>
</dbReference>
<dbReference type="SMR" id="P30215"/>
<dbReference type="GlyCosmos" id="P30215">
    <property type="glycosylation" value="9 sites, No reported glycans"/>
</dbReference>
<dbReference type="Proteomes" id="UP000007552">
    <property type="component" value="Genome"/>
</dbReference>
<dbReference type="Proteomes" id="UP000100580">
    <property type="component" value="Genome"/>
</dbReference>
<dbReference type="Proteomes" id="UP000180344">
    <property type="component" value="Genome"/>
</dbReference>
<dbReference type="GO" id="GO:0020002">
    <property type="term" value="C:host cell plasma membrane"/>
    <property type="evidence" value="ECO:0007669"/>
    <property type="project" value="UniProtKB-SubCell"/>
</dbReference>
<dbReference type="GO" id="GO:0016020">
    <property type="term" value="C:membrane"/>
    <property type="evidence" value="ECO:0007669"/>
    <property type="project" value="UniProtKB-UniRule"/>
</dbReference>
<dbReference type="GO" id="GO:0019031">
    <property type="term" value="C:viral envelope"/>
    <property type="evidence" value="ECO:0007669"/>
    <property type="project" value="UniProtKB-UniRule"/>
</dbReference>
<dbReference type="GO" id="GO:0055036">
    <property type="term" value="C:virion membrane"/>
    <property type="evidence" value="ECO:0007669"/>
    <property type="project" value="UniProtKB-SubCell"/>
</dbReference>
<dbReference type="GO" id="GO:0046789">
    <property type="term" value="F:host cell surface receptor binding"/>
    <property type="evidence" value="ECO:0007669"/>
    <property type="project" value="UniProtKB-UniRule"/>
</dbReference>
<dbReference type="GO" id="GO:0106331">
    <property type="term" value="F:sialate 4-O-acetylesterase activity"/>
    <property type="evidence" value="ECO:0007669"/>
    <property type="project" value="RHEA"/>
</dbReference>
<dbReference type="GO" id="GO:0106330">
    <property type="term" value="F:sialate 9-O-acetylesterase activity"/>
    <property type="evidence" value="ECO:0007669"/>
    <property type="project" value="RHEA"/>
</dbReference>
<dbReference type="GO" id="GO:0001681">
    <property type="term" value="F:sialate O-acetylesterase activity"/>
    <property type="evidence" value="ECO:0000250"/>
    <property type="project" value="UniProtKB"/>
</dbReference>
<dbReference type="GO" id="GO:0019064">
    <property type="term" value="P:fusion of virus membrane with host plasma membrane"/>
    <property type="evidence" value="ECO:0007669"/>
    <property type="project" value="UniProtKB-UniRule"/>
</dbReference>
<dbReference type="GO" id="GO:0019058">
    <property type="term" value="P:viral life cycle"/>
    <property type="evidence" value="ECO:0000315"/>
    <property type="project" value="CACAO"/>
</dbReference>
<dbReference type="HAMAP" id="MF_04207">
    <property type="entry name" value="BETA_CORONA_HE"/>
    <property type="match status" value="1"/>
</dbReference>
<dbReference type="InterPro" id="IPR008980">
    <property type="entry name" value="Capsid_hemagglutn"/>
</dbReference>
<dbReference type="InterPro" id="IPR042545">
    <property type="entry name" value="HEMA"/>
</dbReference>
<dbReference type="InterPro" id="IPR007142">
    <property type="entry name" value="Hemagglutn-estrase_core"/>
</dbReference>
<dbReference type="InterPro" id="IPR003860">
    <property type="entry name" value="Hemagglutn-estrase_hemagglutn"/>
</dbReference>
<dbReference type="Pfam" id="PF03996">
    <property type="entry name" value="Hema_esterase"/>
    <property type="match status" value="1"/>
</dbReference>
<dbReference type="Pfam" id="PF02710">
    <property type="entry name" value="Hema_HEFG"/>
    <property type="match status" value="1"/>
</dbReference>
<dbReference type="SUPFAM" id="SSF52266">
    <property type="entry name" value="SGNH hydrolase"/>
    <property type="match status" value="1"/>
</dbReference>
<dbReference type="SUPFAM" id="SSF49818">
    <property type="entry name" value="Viral protein domain"/>
    <property type="match status" value="1"/>
</dbReference>
<reference key="1">
    <citation type="journal article" date="1992" name="Virology">
        <title>The hemagglutinin/esterase gene of human coronavirus strain OC43: phylogenetic relationships to bovine and murine coronaviruses and influenza C virus.</title>
        <authorList>
            <person name="Zhang X.M."/>
            <person name="Kousoulas K.G."/>
            <person name="Storz J."/>
        </authorList>
    </citation>
    <scope>NUCLEOTIDE SEQUENCE [GENOMIC RNA]</scope>
</reference>
<reference key="2">
    <citation type="journal article" date="2004" name="J. Virol.">
        <title>Human respiratory coronavirus OC43: genetic stability and neuroinvasion.</title>
        <authorList>
            <person name="St Jean J.R."/>
            <person name="Jacomy H."/>
            <person name="Desforges M."/>
            <person name="Vabret A."/>
            <person name="Freymuth F."/>
            <person name="Talbot P.J."/>
        </authorList>
    </citation>
    <scope>NUCLEOTIDE SEQUENCE [GENOMIC RNA]</scope>
    <source>
        <strain>Isolate ATCC VR-759</strain>
        <strain>Isolate clinical OC43-Paris</strain>
    </source>
</reference>
<reference key="3">
    <citation type="journal article" date="2005" name="J. Virol.">
        <title>Complete genomic sequence of human coronavirus OC43: molecular clock analysis suggests a relatively recent zoonotic coronavirus transmission event.</title>
        <authorList>
            <person name="Vijgen L."/>
            <person name="Keyaerts E."/>
            <person name="Moes E."/>
            <person name="Thoelen I."/>
            <person name="Wollants E."/>
            <person name="Lemey P."/>
            <person name="Vandamme A.M."/>
            <person name="Van Ranst M."/>
        </authorList>
    </citation>
    <scope>NUCLEOTIDE SEQUENCE [GENOMIC RNA]</scope>
    <source>
        <strain>Isolate ATCC VR-759</strain>
    </source>
</reference>
<keyword id="KW-1015">Disulfide bond</keyword>
<keyword id="KW-0325">Glycoprotein</keyword>
<keyword id="KW-0348">Hemagglutinin</keyword>
<keyword id="KW-1032">Host cell membrane</keyword>
<keyword id="KW-1043">Host membrane</keyword>
<keyword id="KW-0378">Hydrolase</keyword>
<keyword id="KW-0472">Membrane</keyword>
<keyword id="KW-1185">Reference proteome</keyword>
<keyword id="KW-0732">Signal</keyword>
<keyword id="KW-0812">Transmembrane</keyword>
<keyword id="KW-1133">Transmembrane helix</keyword>
<keyword id="KW-0261">Viral envelope protein</keyword>
<keyword id="KW-0946">Virion</keyword>
<proteinExistence type="inferred from homology"/>
<name>HEMA_CVHOC</name>
<comment type="function">
    <text evidence="1">Structural protein that makes short spikes at the surface of the virus. Contains receptor binding and receptor-destroying activities. Mediates de-O-acetylation of N-acetyl-4-O-acetylneuraminic acid, which is probably the receptor determinant recognized by the virus on the surface of erythrocytes and susceptible cells. This receptor-destroying activity is important for virus release as it probably helps preventing self-aggregation and ensures the efficient spread of the progeny virus from cell to cell. May serve as a secondary viral attachment protein for initiating infection, the spike protein being the major one. May become a target for both the humoral and the cellular branches of the immune system.</text>
</comment>
<comment type="catalytic activity">
    <reaction evidence="1">
        <text>N-acetyl-9-O-acetylneuraminate + H2O = N-acetylneuraminate + acetate + H(+)</text>
        <dbReference type="Rhea" id="RHEA:22600"/>
        <dbReference type="ChEBI" id="CHEBI:15377"/>
        <dbReference type="ChEBI" id="CHEBI:15378"/>
        <dbReference type="ChEBI" id="CHEBI:28999"/>
        <dbReference type="ChEBI" id="CHEBI:30089"/>
        <dbReference type="ChEBI" id="CHEBI:35418"/>
        <dbReference type="EC" id="3.1.1.53"/>
    </reaction>
</comment>
<comment type="catalytic activity">
    <reaction evidence="1">
        <text>N-acetyl-4-O-acetylneuraminate + H2O = N-acetylneuraminate + acetate + H(+)</text>
        <dbReference type="Rhea" id="RHEA:25564"/>
        <dbReference type="ChEBI" id="CHEBI:15377"/>
        <dbReference type="ChEBI" id="CHEBI:15378"/>
        <dbReference type="ChEBI" id="CHEBI:29006"/>
        <dbReference type="ChEBI" id="CHEBI:30089"/>
        <dbReference type="ChEBI" id="CHEBI:35418"/>
        <dbReference type="EC" id="3.1.1.53"/>
    </reaction>
</comment>
<comment type="subunit">
    <text evidence="1">Homodimer; disulfide-linked. Forms a complex with the M protein in the pre-Golgi. Associates then with S-M complex to form a ternary complex S-M-HE.</text>
</comment>
<comment type="subcellular location">
    <subcellularLocation>
        <location evidence="1">Virion membrane</location>
        <topology evidence="1">Single-pass type I membrane protein</topology>
    </subcellularLocation>
    <subcellularLocation>
        <location evidence="1">Host cell membrane</location>
        <topology evidence="1">Single-pass type I membrane protein</topology>
    </subcellularLocation>
    <text evidence="1">In infected cells becomes incorporated into the envelope of virions during virus assembly at the endoplasmic reticulum and cis Golgi. However, some may escape incorporation into virions and subsequently migrate to the cell surface.</text>
</comment>
<comment type="PTM">
    <text evidence="1">N-glycosylated in the host RER.</text>
</comment>
<comment type="similarity">
    <text evidence="1">Belongs to the influenza type C/coronaviruses hemagglutinin-esterase family.</text>
</comment>